<protein>
    <recommendedName>
        <fullName>Probable aquaporin PIP2-8</fullName>
    </recommendedName>
    <alternativeName>
        <fullName>OsPIP2;8</fullName>
    </alternativeName>
    <alternativeName>
        <fullName>Plasma membrane intrinsic protein 2-8</fullName>
    </alternativeName>
</protein>
<accession>Q7Y1E6</accession>
<accession>B7F1U1</accession>
<accession>Q10A90</accession>
<comment type="function">
    <text evidence="1">Aquaporins facilitate the transport of water and small neutral solutes across cell membranes.</text>
</comment>
<comment type="subcellular location">
    <subcellularLocation>
        <location evidence="1">Cell membrane</location>
        <topology evidence="1">Multi-pass membrane protein</topology>
    </subcellularLocation>
</comment>
<comment type="tissue specificity">
    <text evidence="4">Expressed in leaves and at lower levels in roots.</text>
</comment>
<comment type="domain">
    <text>Aquaporins contain two tandem repeats each containing three membrane-spanning domains and a pore-forming loop with the signature motif Asn-Pro-Ala (NPA).</text>
</comment>
<comment type="similarity">
    <text evidence="5">Belongs to the MIP/aquaporin (TC 1.A.8) family. PIP (TC 1.A.8.11) subfamily.</text>
</comment>
<reference key="1">
    <citation type="journal article" date="2005" name="Genome Res.">
        <title>Sequence, annotation, and analysis of synteny between rice chromosome 3 and diverged grass species.</title>
        <authorList>
            <consortium name="The rice chromosome 3 sequencing consortium"/>
            <person name="Buell C.R."/>
            <person name="Yuan Q."/>
            <person name="Ouyang S."/>
            <person name="Liu J."/>
            <person name="Zhu W."/>
            <person name="Wang A."/>
            <person name="Maiti R."/>
            <person name="Haas B."/>
            <person name="Wortman J."/>
            <person name="Pertea M."/>
            <person name="Jones K.M."/>
            <person name="Kim M."/>
            <person name="Overton L."/>
            <person name="Tsitrin T."/>
            <person name="Fadrosh D."/>
            <person name="Bera J."/>
            <person name="Weaver B."/>
            <person name="Jin S."/>
            <person name="Johri S."/>
            <person name="Reardon M."/>
            <person name="Webb K."/>
            <person name="Hill J."/>
            <person name="Moffat K."/>
            <person name="Tallon L."/>
            <person name="Van Aken S."/>
            <person name="Lewis M."/>
            <person name="Utterback T."/>
            <person name="Feldblyum T."/>
            <person name="Zismann V."/>
            <person name="Iobst S."/>
            <person name="Hsiao J."/>
            <person name="de Vazeille A.R."/>
            <person name="Salzberg S.L."/>
            <person name="White O."/>
            <person name="Fraser C.M."/>
            <person name="Yu Y."/>
            <person name="Kim H."/>
            <person name="Rambo T."/>
            <person name="Currie J."/>
            <person name="Collura K."/>
            <person name="Kernodle-Thompson S."/>
            <person name="Wei F."/>
            <person name="Kudrna K."/>
            <person name="Ammiraju J.S.S."/>
            <person name="Luo M."/>
            <person name="Goicoechea J.L."/>
            <person name="Wing R.A."/>
            <person name="Henry D."/>
            <person name="Oates R."/>
            <person name="Palmer M."/>
            <person name="Pries G."/>
            <person name="Saski C."/>
            <person name="Simmons J."/>
            <person name="Soderlund C."/>
            <person name="Nelson W."/>
            <person name="de la Bastide M."/>
            <person name="Spiegel L."/>
            <person name="Nascimento L."/>
            <person name="Huang E."/>
            <person name="Preston R."/>
            <person name="Zutavern T."/>
            <person name="Palmer L."/>
            <person name="O'Shaughnessy A."/>
            <person name="Dike S."/>
            <person name="McCombie W.R."/>
            <person name="Minx P."/>
            <person name="Cordum H."/>
            <person name="Wilson R."/>
            <person name="Jin W."/>
            <person name="Lee H.R."/>
            <person name="Jiang J."/>
            <person name="Jackson S."/>
        </authorList>
    </citation>
    <scope>NUCLEOTIDE SEQUENCE [LARGE SCALE GENOMIC DNA]</scope>
    <source>
        <strain>cv. Nipponbare</strain>
    </source>
</reference>
<reference key="2">
    <citation type="journal article" date="2005" name="Nature">
        <title>The map-based sequence of the rice genome.</title>
        <authorList>
            <consortium name="International rice genome sequencing project (IRGSP)"/>
        </authorList>
    </citation>
    <scope>NUCLEOTIDE SEQUENCE [LARGE SCALE GENOMIC DNA]</scope>
    <source>
        <strain>cv. Nipponbare</strain>
    </source>
</reference>
<reference key="3">
    <citation type="journal article" date="2008" name="Nucleic Acids Res.">
        <title>The rice annotation project database (RAP-DB): 2008 update.</title>
        <authorList>
            <consortium name="The rice annotation project (RAP)"/>
        </authorList>
    </citation>
    <scope>GENOME REANNOTATION</scope>
    <source>
        <strain>cv. Nipponbare</strain>
    </source>
</reference>
<reference key="4">
    <citation type="journal article" date="2013" name="Rice">
        <title>Improvement of the Oryza sativa Nipponbare reference genome using next generation sequence and optical map data.</title>
        <authorList>
            <person name="Kawahara Y."/>
            <person name="de la Bastide M."/>
            <person name="Hamilton J.P."/>
            <person name="Kanamori H."/>
            <person name="McCombie W.R."/>
            <person name="Ouyang S."/>
            <person name="Schwartz D.C."/>
            <person name="Tanaka T."/>
            <person name="Wu J."/>
            <person name="Zhou S."/>
            <person name="Childs K.L."/>
            <person name="Davidson R.M."/>
            <person name="Lin H."/>
            <person name="Quesada-Ocampo L."/>
            <person name="Vaillancourt B."/>
            <person name="Sakai H."/>
            <person name="Lee S.S."/>
            <person name="Kim J."/>
            <person name="Numa H."/>
            <person name="Itoh T."/>
            <person name="Buell C.R."/>
            <person name="Matsumoto T."/>
        </authorList>
    </citation>
    <scope>GENOME REANNOTATION</scope>
    <source>
        <strain>cv. Nipponbare</strain>
    </source>
</reference>
<reference key="5">
    <citation type="journal article" date="2003" name="Science">
        <title>Collection, mapping, and annotation of over 28,000 cDNA clones from japonica rice.</title>
        <authorList>
            <consortium name="The rice full-length cDNA consortium"/>
        </authorList>
    </citation>
    <scope>NUCLEOTIDE SEQUENCE [LARGE SCALE MRNA]</scope>
    <source>
        <strain>cv. Nipponbare</strain>
    </source>
</reference>
<reference key="6">
    <citation type="journal article" date="2005" name="Plant Cell Physiol.">
        <title>Identification of 33 rice aquaporin genes and analysis of their expression and function.</title>
        <authorList>
            <person name="Sakurai J."/>
            <person name="Ishikawa F."/>
            <person name="Yamaguchi T."/>
            <person name="Uemura M."/>
            <person name="Maeshima M."/>
        </authorList>
    </citation>
    <scope>NOMENCLATURE</scope>
    <scope>TISSUE SPECIFICITY</scope>
</reference>
<dbReference type="EMBL" id="AC092263">
    <property type="protein sequence ID" value="AAP44741.1"/>
    <property type="molecule type" value="Genomic_DNA"/>
</dbReference>
<dbReference type="EMBL" id="DP000009">
    <property type="protein sequence ID" value="ABG00028.1"/>
    <property type="molecule type" value="Genomic_DNA"/>
</dbReference>
<dbReference type="EMBL" id="AP008209">
    <property type="protein sequence ID" value="BAF13894.1"/>
    <property type="molecule type" value="Genomic_DNA"/>
</dbReference>
<dbReference type="EMBL" id="AP014959">
    <property type="protein sequence ID" value="BAS87491.1"/>
    <property type="molecule type" value="Genomic_DNA"/>
</dbReference>
<dbReference type="EMBL" id="AK109024">
    <property type="protein sequence ID" value="BAG98588.1"/>
    <property type="molecule type" value="mRNA"/>
</dbReference>
<dbReference type="RefSeq" id="XP_015630805.1">
    <property type="nucleotide sequence ID" value="XM_015775319.1"/>
</dbReference>
<dbReference type="SMR" id="Q7Y1E6"/>
<dbReference type="FunCoup" id="Q7Y1E6">
    <property type="interactions" value="259"/>
</dbReference>
<dbReference type="STRING" id="39947.Q7Y1E6"/>
<dbReference type="PaxDb" id="39947-Q7Y1E6"/>
<dbReference type="EnsemblPlants" id="Os03t0861300-01">
    <property type="protein sequence ID" value="Os03t0861300-01"/>
    <property type="gene ID" value="Os03g0861300"/>
</dbReference>
<dbReference type="Gramene" id="Os03t0861300-01">
    <property type="protein sequence ID" value="Os03t0861300-01"/>
    <property type="gene ID" value="Os03g0861300"/>
</dbReference>
<dbReference type="KEGG" id="dosa:Os03g0861300"/>
<dbReference type="eggNOG" id="KOG0223">
    <property type="taxonomic scope" value="Eukaryota"/>
</dbReference>
<dbReference type="HOGENOM" id="CLU_020019_3_0_1"/>
<dbReference type="InParanoid" id="Q7Y1E6"/>
<dbReference type="OrthoDB" id="620659at2759"/>
<dbReference type="Proteomes" id="UP000000763">
    <property type="component" value="Chromosome 3"/>
</dbReference>
<dbReference type="Proteomes" id="UP000059680">
    <property type="component" value="Chromosome 3"/>
</dbReference>
<dbReference type="GO" id="GO:0005886">
    <property type="term" value="C:plasma membrane"/>
    <property type="evidence" value="ECO:0000318"/>
    <property type="project" value="GO_Central"/>
</dbReference>
<dbReference type="GO" id="GO:0015250">
    <property type="term" value="F:water channel activity"/>
    <property type="evidence" value="ECO:0000318"/>
    <property type="project" value="GO_Central"/>
</dbReference>
<dbReference type="CDD" id="cd00333">
    <property type="entry name" value="MIP"/>
    <property type="match status" value="1"/>
</dbReference>
<dbReference type="FunFam" id="1.20.1080.10:FF:000021">
    <property type="entry name" value="Probable aquaporin PIP2-8"/>
    <property type="match status" value="1"/>
</dbReference>
<dbReference type="Gene3D" id="1.20.1080.10">
    <property type="entry name" value="Glycerol uptake facilitator protein"/>
    <property type="match status" value="1"/>
</dbReference>
<dbReference type="InterPro" id="IPR023271">
    <property type="entry name" value="Aquaporin-like"/>
</dbReference>
<dbReference type="InterPro" id="IPR034294">
    <property type="entry name" value="Aquaporin_transptr"/>
</dbReference>
<dbReference type="InterPro" id="IPR000425">
    <property type="entry name" value="MIP"/>
</dbReference>
<dbReference type="InterPro" id="IPR022357">
    <property type="entry name" value="MIP_CS"/>
</dbReference>
<dbReference type="NCBIfam" id="TIGR00861">
    <property type="entry name" value="MIP"/>
    <property type="match status" value="1"/>
</dbReference>
<dbReference type="PANTHER" id="PTHR45687">
    <property type="entry name" value="AQUAPORIN OR AQUAGLYCEROPORIN RELATED"/>
    <property type="match status" value="1"/>
</dbReference>
<dbReference type="Pfam" id="PF00230">
    <property type="entry name" value="MIP"/>
    <property type="match status" value="1"/>
</dbReference>
<dbReference type="PRINTS" id="PR00783">
    <property type="entry name" value="MINTRINSICP"/>
</dbReference>
<dbReference type="SUPFAM" id="SSF81338">
    <property type="entry name" value="Aquaporin-like"/>
    <property type="match status" value="1"/>
</dbReference>
<dbReference type="PROSITE" id="PS00221">
    <property type="entry name" value="MIP"/>
    <property type="match status" value="1"/>
</dbReference>
<sequence length="280" mass="28675">MAAGSGSGSNPKDYQDPPPAPLVDTGELGKWSLYRAAIAEFTATLLLVCISVSTVIGEKRQSGEGGAGVLGIAWAFGGLIFVLVYCTAGISGGHMNPAVTFAMVLARRVSLPRAALYTMAQCVGAVCGAGLARAMHGGGQYARHGGGANELAAGYSAGAGVVAEMVGTFVLVYTVFSATDPKRKARDSHVPVLAPLPIGLAVLVVHLATIPITGTGINPARSLGPALVLGLGTTKAWSHLWIFWVGPFAGAAAAMIYHHYILRGAAAKAFASSSYRSPHF</sequence>
<proteinExistence type="evidence at transcript level"/>
<name>PIP28_ORYSJ</name>
<keyword id="KW-1003">Cell membrane</keyword>
<keyword id="KW-0472">Membrane</keyword>
<keyword id="KW-1185">Reference proteome</keyword>
<keyword id="KW-0677">Repeat</keyword>
<keyword id="KW-0812">Transmembrane</keyword>
<keyword id="KW-1133">Transmembrane helix</keyword>
<keyword id="KW-0813">Transport</keyword>
<gene>
    <name type="primary">PIP2-8</name>
    <name type="ordered locus">Os03g0861300</name>
    <name type="ordered locus">LOC_Os03g64330</name>
    <name type="ORF">OSJNBa0033P04.25</name>
</gene>
<feature type="chain" id="PRO_0000064041" description="Probable aquaporin PIP2-8">
    <location>
        <begin position="1"/>
        <end position="280"/>
    </location>
</feature>
<feature type="transmembrane region" description="Helical; Name=1" evidence="2">
    <location>
        <begin position="36"/>
        <end position="56"/>
    </location>
</feature>
<feature type="transmembrane region" description="Helical; Name=2" evidence="2">
    <location>
        <begin position="70"/>
        <end position="92"/>
    </location>
</feature>
<feature type="transmembrane region" description="Helical; Name=3" evidence="2">
    <location>
        <begin position="113"/>
        <end position="135"/>
    </location>
</feature>
<feature type="transmembrane region" description="Helical; Name=4" evidence="2">
    <location>
        <begin position="156"/>
        <end position="176"/>
    </location>
</feature>
<feature type="transmembrane region" description="Helical; Name=5" evidence="2">
    <location>
        <begin position="192"/>
        <end position="212"/>
    </location>
</feature>
<feature type="transmembrane region" description="Helical; Name=6" evidence="2">
    <location>
        <begin position="236"/>
        <end position="256"/>
    </location>
</feature>
<feature type="region of interest" description="Disordered" evidence="3">
    <location>
        <begin position="1"/>
        <end position="21"/>
    </location>
</feature>
<feature type="short sequence motif" description="NPA 1">
    <location>
        <begin position="96"/>
        <end position="98"/>
    </location>
</feature>
<feature type="short sequence motif" description="NPA 2">
    <location>
        <begin position="218"/>
        <end position="220"/>
    </location>
</feature>
<evidence type="ECO:0000250" key="1"/>
<evidence type="ECO:0000255" key="2"/>
<evidence type="ECO:0000256" key="3">
    <source>
        <dbReference type="SAM" id="MobiDB-lite"/>
    </source>
</evidence>
<evidence type="ECO:0000269" key="4">
    <source>
    </source>
</evidence>
<evidence type="ECO:0000305" key="5"/>
<organism>
    <name type="scientific">Oryza sativa subsp. japonica</name>
    <name type="common">Rice</name>
    <dbReference type="NCBI Taxonomy" id="39947"/>
    <lineage>
        <taxon>Eukaryota</taxon>
        <taxon>Viridiplantae</taxon>
        <taxon>Streptophyta</taxon>
        <taxon>Embryophyta</taxon>
        <taxon>Tracheophyta</taxon>
        <taxon>Spermatophyta</taxon>
        <taxon>Magnoliopsida</taxon>
        <taxon>Liliopsida</taxon>
        <taxon>Poales</taxon>
        <taxon>Poaceae</taxon>
        <taxon>BOP clade</taxon>
        <taxon>Oryzoideae</taxon>
        <taxon>Oryzeae</taxon>
        <taxon>Oryzinae</taxon>
        <taxon>Oryza</taxon>
        <taxon>Oryza sativa</taxon>
    </lineage>
</organism>